<accession>Q8X8W8</accession>
<accession>Q7AHL7</accession>
<organism>
    <name type="scientific">Escherichia coli O157:H7</name>
    <dbReference type="NCBI Taxonomy" id="83334"/>
    <lineage>
        <taxon>Bacteria</taxon>
        <taxon>Pseudomonadati</taxon>
        <taxon>Pseudomonadota</taxon>
        <taxon>Gammaproteobacteria</taxon>
        <taxon>Enterobacterales</taxon>
        <taxon>Enterobacteriaceae</taxon>
        <taxon>Escherichia</taxon>
    </lineage>
</organism>
<protein>
    <recommendedName>
        <fullName evidence="1">tRNA(Ile)-lysidine synthase</fullName>
        <ecNumber evidence="1">6.3.4.19</ecNumber>
    </recommendedName>
    <alternativeName>
        <fullName evidence="1">tRNA(Ile)-2-lysyl-cytidine synthase</fullName>
    </alternativeName>
    <alternativeName>
        <fullName evidence="1">tRNA(Ile)-lysidine synthetase</fullName>
    </alternativeName>
</protein>
<dbReference type="EC" id="6.3.4.19" evidence="1"/>
<dbReference type="EMBL" id="AE005174">
    <property type="protein sequence ID" value="AAG54490.1"/>
    <property type="molecule type" value="Genomic_DNA"/>
</dbReference>
<dbReference type="EMBL" id="BA000007">
    <property type="protein sequence ID" value="BAB33613.1"/>
    <property type="molecule type" value="Genomic_DNA"/>
</dbReference>
<dbReference type="PIR" id="F85503">
    <property type="entry name" value="F85503"/>
</dbReference>
<dbReference type="PIR" id="F90652">
    <property type="entry name" value="F90652"/>
</dbReference>
<dbReference type="RefSeq" id="NP_308217.1">
    <property type="nucleotide sequence ID" value="NC_002695.1"/>
</dbReference>
<dbReference type="RefSeq" id="WP_000176537.1">
    <property type="nucleotide sequence ID" value="NZ_VOAI01000002.1"/>
</dbReference>
<dbReference type="SMR" id="Q8X8W8"/>
<dbReference type="STRING" id="155864.Z0200"/>
<dbReference type="GeneID" id="913916"/>
<dbReference type="KEGG" id="ece:Z0200"/>
<dbReference type="KEGG" id="ecs:ECs_0190"/>
<dbReference type="PATRIC" id="fig|386585.9.peg.293"/>
<dbReference type="eggNOG" id="COG0037">
    <property type="taxonomic scope" value="Bacteria"/>
</dbReference>
<dbReference type="HOGENOM" id="CLU_018869_2_0_6"/>
<dbReference type="OMA" id="QTETFFL"/>
<dbReference type="Proteomes" id="UP000000558">
    <property type="component" value="Chromosome"/>
</dbReference>
<dbReference type="Proteomes" id="UP000002519">
    <property type="component" value="Chromosome"/>
</dbReference>
<dbReference type="GO" id="GO:0005737">
    <property type="term" value="C:cytoplasm"/>
    <property type="evidence" value="ECO:0007669"/>
    <property type="project" value="UniProtKB-SubCell"/>
</dbReference>
<dbReference type="GO" id="GO:0005524">
    <property type="term" value="F:ATP binding"/>
    <property type="evidence" value="ECO:0007669"/>
    <property type="project" value="UniProtKB-UniRule"/>
</dbReference>
<dbReference type="GO" id="GO:0032267">
    <property type="term" value="F:tRNA(Ile)-lysidine synthase activity"/>
    <property type="evidence" value="ECO:0007669"/>
    <property type="project" value="UniProtKB-EC"/>
</dbReference>
<dbReference type="GO" id="GO:0006400">
    <property type="term" value="P:tRNA modification"/>
    <property type="evidence" value="ECO:0007669"/>
    <property type="project" value="UniProtKB-UniRule"/>
</dbReference>
<dbReference type="CDD" id="cd01992">
    <property type="entry name" value="TilS_N"/>
    <property type="match status" value="1"/>
</dbReference>
<dbReference type="FunFam" id="3.40.50.620:FF:000173">
    <property type="entry name" value="tRNA(Ile)-lysidine synthase"/>
    <property type="match status" value="1"/>
</dbReference>
<dbReference type="Gene3D" id="1.20.59.20">
    <property type="match status" value="1"/>
</dbReference>
<dbReference type="Gene3D" id="3.40.50.620">
    <property type="entry name" value="HUPs"/>
    <property type="match status" value="1"/>
</dbReference>
<dbReference type="HAMAP" id="MF_01161">
    <property type="entry name" value="tRNA_Ile_lys_synt"/>
    <property type="match status" value="1"/>
</dbReference>
<dbReference type="InterPro" id="IPR012796">
    <property type="entry name" value="Lysidine-tRNA-synth_C"/>
</dbReference>
<dbReference type="InterPro" id="IPR014729">
    <property type="entry name" value="Rossmann-like_a/b/a_fold"/>
</dbReference>
<dbReference type="InterPro" id="IPR011063">
    <property type="entry name" value="TilS/TtcA_N"/>
</dbReference>
<dbReference type="InterPro" id="IPR012094">
    <property type="entry name" value="tRNA_Ile_lys_synt"/>
</dbReference>
<dbReference type="InterPro" id="IPR012795">
    <property type="entry name" value="tRNA_Ile_lys_synt_N"/>
</dbReference>
<dbReference type="InterPro" id="IPR015262">
    <property type="entry name" value="tRNA_Ile_lys_synt_subst-bd"/>
</dbReference>
<dbReference type="NCBIfam" id="TIGR02433">
    <property type="entry name" value="lysidine_TilS_C"/>
    <property type="match status" value="1"/>
</dbReference>
<dbReference type="NCBIfam" id="TIGR02432">
    <property type="entry name" value="lysidine_TilS_N"/>
    <property type="match status" value="1"/>
</dbReference>
<dbReference type="NCBIfam" id="NF007942">
    <property type="entry name" value="PRK10660.1"/>
    <property type="match status" value="1"/>
</dbReference>
<dbReference type="PANTHER" id="PTHR43033">
    <property type="entry name" value="TRNA(ILE)-LYSIDINE SYNTHASE-RELATED"/>
    <property type="match status" value="1"/>
</dbReference>
<dbReference type="PANTHER" id="PTHR43033:SF1">
    <property type="entry name" value="TRNA(ILE)-LYSIDINE SYNTHASE-RELATED"/>
    <property type="match status" value="1"/>
</dbReference>
<dbReference type="Pfam" id="PF01171">
    <property type="entry name" value="ATP_bind_3"/>
    <property type="match status" value="1"/>
</dbReference>
<dbReference type="Pfam" id="PF09179">
    <property type="entry name" value="TilS"/>
    <property type="match status" value="1"/>
</dbReference>
<dbReference type="Pfam" id="PF11734">
    <property type="entry name" value="TilS_C"/>
    <property type="match status" value="1"/>
</dbReference>
<dbReference type="SMART" id="SM00977">
    <property type="entry name" value="TilS_C"/>
    <property type="match status" value="1"/>
</dbReference>
<dbReference type="SUPFAM" id="SSF52402">
    <property type="entry name" value="Adenine nucleotide alpha hydrolases-like"/>
    <property type="match status" value="1"/>
</dbReference>
<dbReference type="SUPFAM" id="SSF82829">
    <property type="entry name" value="MesJ substrate recognition domain-like"/>
    <property type="match status" value="1"/>
</dbReference>
<dbReference type="SUPFAM" id="SSF56037">
    <property type="entry name" value="PheT/TilS domain"/>
    <property type="match status" value="1"/>
</dbReference>
<reference key="1">
    <citation type="journal article" date="2001" name="Nature">
        <title>Genome sequence of enterohaemorrhagic Escherichia coli O157:H7.</title>
        <authorList>
            <person name="Perna N.T."/>
            <person name="Plunkett G. III"/>
            <person name="Burland V."/>
            <person name="Mau B."/>
            <person name="Glasner J.D."/>
            <person name="Rose D.J."/>
            <person name="Mayhew G.F."/>
            <person name="Evans P.S."/>
            <person name="Gregor J."/>
            <person name="Kirkpatrick H.A."/>
            <person name="Posfai G."/>
            <person name="Hackett J."/>
            <person name="Klink S."/>
            <person name="Boutin A."/>
            <person name="Shao Y."/>
            <person name="Miller L."/>
            <person name="Grotbeck E.J."/>
            <person name="Davis N.W."/>
            <person name="Lim A."/>
            <person name="Dimalanta E.T."/>
            <person name="Potamousis K."/>
            <person name="Apodaca J."/>
            <person name="Anantharaman T.S."/>
            <person name="Lin J."/>
            <person name="Yen G."/>
            <person name="Schwartz D.C."/>
            <person name="Welch R.A."/>
            <person name="Blattner F.R."/>
        </authorList>
    </citation>
    <scope>NUCLEOTIDE SEQUENCE [LARGE SCALE GENOMIC DNA]</scope>
    <source>
        <strain>O157:H7 / EDL933 / ATCC 700927 / EHEC</strain>
    </source>
</reference>
<reference key="2">
    <citation type="journal article" date="2001" name="DNA Res.">
        <title>Complete genome sequence of enterohemorrhagic Escherichia coli O157:H7 and genomic comparison with a laboratory strain K-12.</title>
        <authorList>
            <person name="Hayashi T."/>
            <person name="Makino K."/>
            <person name="Ohnishi M."/>
            <person name="Kurokawa K."/>
            <person name="Ishii K."/>
            <person name="Yokoyama K."/>
            <person name="Han C.-G."/>
            <person name="Ohtsubo E."/>
            <person name="Nakayama K."/>
            <person name="Murata T."/>
            <person name="Tanaka M."/>
            <person name="Tobe T."/>
            <person name="Iida T."/>
            <person name="Takami H."/>
            <person name="Honda T."/>
            <person name="Sasakawa C."/>
            <person name="Ogasawara N."/>
            <person name="Yasunaga T."/>
            <person name="Kuhara S."/>
            <person name="Shiba T."/>
            <person name="Hattori M."/>
            <person name="Shinagawa H."/>
        </authorList>
    </citation>
    <scope>NUCLEOTIDE SEQUENCE [LARGE SCALE GENOMIC DNA]</scope>
    <source>
        <strain>O157:H7 / Sakai / RIMD 0509952 / EHEC</strain>
    </source>
</reference>
<feature type="chain" id="PRO_0000181690" description="tRNA(Ile)-lysidine synthase">
    <location>
        <begin position="1"/>
        <end position="431"/>
    </location>
</feature>
<feature type="binding site" evidence="1">
    <location>
        <begin position="20"/>
        <end position="25"/>
    </location>
    <ligand>
        <name>ATP</name>
        <dbReference type="ChEBI" id="CHEBI:30616"/>
    </ligand>
</feature>
<proteinExistence type="inferred from homology"/>
<gene>
    <name evidence="1" type="primary">tilS</name>
    <name type="synonym">mesJ</name>
    <name type="ordered locus">Z0200</name>
    <name type="ordered locus">ECs0190</name>
</gene>
<keyword id="KW-0067">ATP-binding</keyword>
<keyword id="KW-0963">Cytoplasm</keyword>
<keyword id="KW-0436">Ligase</keyword>
<keyword id="KW-0547">Nucleotide-binding</keyword>
<keyword id="KW-1185">Reference proteome</keyword>
<keyword id="KW-0819">tRNA processing</keyword>
<comment type="function">
    <text evidence="1">Ligates lysine onto the cytidine present at position 34 of the AUA codon-specific tRNA(Ile) that contains the anticodon CAU, in an ATP-dependent manner. Cytidine is converted to lysidine, thus changing the amino acid specificity of the tRNA from methionine to isoleucine.</text>
</comment>
<comment type="catalytic activity">
    <reaction evidence="1">
        <text>cytidine(34) in tRNA(Ile2) + L-lysine + ATP = lysidine(34) in tRNA(Ile2) + AMP + diphosphate + H(+)</text>
        <dbReference type="Rhea" id="RHEA:43744"/>
        <dbReference type="Rhea" id="RHEA-COMP:10625"/>
        <dbReference type="Rhea" id="RHEA-COMP:10670"/>
        <dbReference type="ChEBI" id="CHEBI:15378"/>
        <dbReference type="ChEBI" id="CHEBI:30616"/>
        <dbReference type="ChEBI" id="CHEBI:32551"/>
        <dbReference type="ChEBI" id="CHEBI:33019"/>
        <dbReference type="ChEBI" id="CHEBI:82748"/>
        <dbReference type="ChEBI" id="CHEBI:83665"/>
        <dbReference type="ChEBI" id="CHEBI:456215"/>
        <dbReference type="EC" id="6.3.4.19"/>
    </reaction>
</comment>
<comment type="subcellular location">
    <subcellularLocation>
        <location evidence="1">Cytoplasm</location>
    </subcellularLocation>
</comment>
<comment type="domain">
    <text>The N-terminal region contains the highly conserved SGGXDS motif, predicted to be a P-loop motif involved in ATP binding.</text>
</comment>
<comment type="similarity">
    <text evidence="1">Belongs to the tRNA(Ile)-lysidine synthase family.</text>
</comment>
<sequence>MTLTLNRQLLTSRQILVAFSGGLDSTVLLHQLVQWRTENPGGALRAIHVHHGLSANADAWVTHCENVCQQWQVPLVVERVQLAQEGLGIEAQARQARYQAFARTLLPGEVLVTAQHLDDQCETFLLALKRGSGPAGLSAMAEVSEFAGTRLIRPLLARTRGELAQWALAHGLRWIEDESNQDDSYDRNFLRLRVVPLLQQRWPHFAETTARSAALCAEQESLLDELLADDLAHCQSPQGTLQIVPMLAMSDARRAAIIRRWLAGQNAPMPSRDALVRIWQEVALAREDASPCLRLGAFEIRRYQSQLWWIKSVTGQSENIVPWQTWLQPLELPAGQGSVQLNAGGDIRPPRADEAVSVRFKAPGLLHIVGRNGGRKLKKIWQELGVPPWLRDTTPLLFYGETLIAAAGGFVTQEGVAEGENGISFVWQRNA</sequence>
<evidence type="ECO:0000255" key="1">
    <source>
        <dbReference type="HAMAP-Rule" id="MF_01161"/>
    </source>
</evidence>
<name>TILS_ECO57</name>